<sequence length="557" mass="59180">MAAQGFLLIATFLLVLMVLARPLGSGLARLINDIPLPGTAGVERILFRLPGVSDHEMNWKQYLCAILGLNMLGLAVLFFMLLGQHYLPLNPQQLPGLSWDLALNTAVSFVTNTNWQSYSGETTLSYFSQMAGLTVQNFLSAASGIAVIFAFIRAFTRQSMSTLGNAWVDLLRITLWVLVPVALLIALFFIQQGALQNFLPYQAVNTVEGAQQLLPMGPVASQEAIKMLGTNGGGFFNANSSHPFENPTALTNFVQMLAIFLIPTALCFAFGEVTGDRRQGRMLLWAMSVIFVICVGVVMWAEVQGNPHLLALGADSSINMEGKESRFGVLVSSLFAVVTTAASCGAVIAMHDSFTALGGMVPMWLMQIGEVVFGGVGSGLYGMMLFVLLAVFIAGLMIGRTPEYLGKKIDVREMKLTALAILVTPTLVLMGAALAMMTDAGRSAMLNPGPHGFSEVLYAVSSAANNNGSAFAGLSANSPFWNCLLAFCMFVGRFGVIIPVMAIAGSLVSKKSQPASSGTLPTHGPLFVGLLIGTVLLVGALTFIPALALGPVAEYLS</sequence>
<accession>Q324K9</accession>
<protein>
    <recommendedName>
        <fullName evidence="1">Potassium-transporting ATPase potassium-binding subunit</fullName>
    </recommendedName>
    <alternativeName>
        <fullName evidence="1">ATP phosphohydrolase [potassium-transporting] A chain</fullName>
    </alternativeName>
    <alternativeName>
        <fullName evidence="1">Potassium-binding and translocating subunit A</fullName>
    </alternativeName>
    <alternativeName>
        <fullName evidence="1">Potassium-translocating ATPase A chain</fullName>
    </alternativeName>
</protein>
<dbReference type="EMBL" id="CP000036">
    <property type="protein sequence ID" value="ABB65249.1"/>
    <property type="molecule type" value="Genomic_DNA"/>
</dbReference>
<dbReference type="RefSeq" id="WP_000730106.1">
    <property type="nucleotide sequence ID" value="NC_007613.1"/>
</dbReference>
<dbReference type="SMR" id="Q324K9"/>
<dbReference type="KEGG" id="sbo:SBO_0560"/>
<dbReference type="HOGENOM" id="CLU_018614_3_0_6"/>
<dbReference type="Proteomes" id="UP000007067">
    <property type="component" value="Chromosome"/>
</dbReference>
<dbReference type="GO" id="GO:0005886">
    <property type="term" value="C:plasma membrane"/>
    <property type="evidence" value="ECO:0007669"/>
    <property type="project" value="UniProtKB-SubCell"/>
</dbReference>
<dbReference type="GO" id="GO:0008556">
    <property type="term" value="F:P-type potassium transmembrane transporter activity"/>
    <property type="evidence" value="ECO:0007669"/>
    <property type="project" value="InterPro"/>
</dbReference>
<dbReference type="GO" id="GO:0030955">
    <property type="term" value="F:potassium ion binding"/>
    <property type="evidence" value="ECO:0007669"/>
    <property type="project" value="UniProtKB-UniRule"/>
</dbReference>
<dbReference type="HAMAP" id="MF_00275">
    <property type="entry name" value="KdpA"/>
    <property type="match status" value="1"/>
</dbReference>
<dbReference type="InterPro" id="IPR004623">
    <property type="entry name" value="KdpA"/>
</dbReference>
<dbReference type="NCBIfam" id="TIGR00680">
    <property type="entry name" value="kdpA"/>
    <property type="match status" value="1"/>
</dbReference>
<dbReference type="PANTHER" id="PTHR30607">
    <property type="entry name" value="POTASSIUM-TRANSPORTING ATPASE A CHAIN"/>
    <property type="match status" value="1"/>
</dbReference>
<dbReference type="PANTHER" id="PTHR30607:SF2">
    <property type="entry name" value="POTASSIUM-TRANSPORTING ATPASE POTASSIUM-BINDING SUBUNIT"/>
    <property type="match status" value="1"/>
</dbReference>
<dbReference type="Pfam" id="PF03814">
    <property type="entry name" value="KdpA"/>
    <property type="match status" value="1"/>
</dbReference>
<dbReference type="PIRSF" id="PIRSF001294">
    <property type="entry name" value="K_ATPaseA"/>
    <property type="match status" value="1"/>
</dbReference>
<comment type="function">
    <text evidence="1">Part of the high-affinity ATP-driven potassium transport (or Kdp) system, which catalyzes the hydrolysis of ATP coupled with the electrogenic transport of potassium into the cytoplasm. This subunit binds the periplasmic potassium ions and delivers the ions to the membrane domain of KdpB through an intramembrane tunnel.</text>
</comment>
<comment type="subunit">
    <text evidence="1">The system is composed of three essential subunits: KdpA, KdpB and KdpC.</text>
</comment>
<comment type="subcellular location">
    <subcellularLocation>
        <location evidence="1">Cell inner membrane</location>
        <topology evidence="1">Multi-pass membrane protein</topology>
    </subcellularLocation>
</comment>
<comment type="similarity">
    <text evidence="1">Belongs to the KdpA family.</text>
</comment>
<name>KDPA_SHIBS</name>
<feature type="chain" id="PRO_1000022244" description="Potassium-transporting ATPase potassium-binding subunit">
    <location>
        <begin position="1"/>
        <end position="557"/>
    </location>
</feature>
<feature type="transmembrane region" description="Helical" evidence="1">
    <location>
        <begin position="5"/>
        <end position="25"/>
    </location>
</feature>
<feature type="transmembrane region" description="Helical" evidence="1">
    <location>
        <begin position="63"/>
        <end position="83"/>
    </location>
</feature>
<feature type="transmembrane region" description="Helical" evidence="1">
    <location>
        <begin position="132"/>
        <end position="152"/>
    </location>
</feature>
<feature type="transmembrane region" description="Helical" evidence="1">
    <location>
        <begin position="170"/>
        <end position="190"/>
    </location>
</feature>
<feature type="transmembrane region" description="Helical" evidence="1">
    <location>
        <begin position="253"/>
        <end position="273"/>
    </location>
</feature>
<feature type="transmembrane region" description="Helical" evidence="1">
    <location>
        <begin position="283"/>
        <end position="303"/>
    </location>
</feature>
<feature type="transmembrane region" description="Helical" evidence="1">
    <location>
        <begin position="329"/>
        <end position="349"/>
    </location>
</feature>
<feature type="transmembrane region" description="Helical" evidence="1">
    <location>
        <begin position="356"/>
        <end position="376"/>
    </location>
</feature>
<feature type="transmembrane region" description="Helical" evidence="1">
    <location>
        <begin position="379"/>
        <end position="399"/>
    </location>
</feature>
<feature type="transmembrane region" description="Helical" evidence="1">
    <location>
        <begin position="416"/>
        <end position="436"/>
    </location>
</feature>
<feature type="transmembrane region" description="Helical" evidence="1">
    <location>
        <begin position="484"/>
        <end position="504"/>
    </location>
</feature>
<feature type="transmembrane region" description="Helical" evidence="1">
    <location>
        <begin position="526"/>
        <end position="546"/>
    </location>
</feature>
<proteinExistence type="inferred from homology"/>
<gene>
    <name evidence="1" type="primary">kdpA</name>
    <name type="ordered locus">SBO_0560</name>
</gene>
<evidence type="ECO:0000255" key="1">
    <source>
        <dbReference type="HAMAP-Rule" id="MF_00275"/>
    </source>
</evidence>
<reference key="1">
    <citation type="journal article" date="2005" name="Nucleic Acids Res.">
        <title>Genome dynamics and diversity of Shigella species, the etiologic agents of bacillary dysentery.</title>
        <authorList>
            <person name="Yang F."/>
            <person name="Yang J."/>
            <person name="Zhang X."/>
            <person name="Chen L."/>
            <person name="Jiang Y."/>
            <person name="Yan Y."/>
            <person name="Tang X."/>
            <person name="Wang J."/>
            <person name="Xiong Z."/>
            <person name="Dong J."/>
            <person name="Xue Y."/>
            <person name="Zhu Y."/>
            <person name="Xu X."/>
            <person name="Sun L."/>
            <person name="Chen S."/>
            <person name="Nie H."/>
            <person name="Peng J."/>
            <person name="Xu J."/>
            <person name="Wang Y."/>
            <person name="Yuan Z."/>
            <person name="Wen Y."/>
            <person name="Yao Z."/>
            <person name="Shen Y."/>
            <person name="Qiang B."/>
            <person name="Hou Y."/>
            <person name="Yu J."/>
            <person name="Jin Q."/>
        </authorList>
    </citation>
    <scope>NUCLEOTIDE SEQUENCE [LARGE SCALE GENOMIC DNA]</scope>
    <source>
        <strain>Sb227</strain>
    </source>
</reference>
<keyword id="KW-0997">Cell inner membrane</keyword>
<keyword id="KW-1003">Cell membrane</keyword>
<keyword id="KW-0406">Ion transport</keyword>
<keyword id="KW-0472">Membrane</keyword>
<keyword id="KW-0630">Potassium</keyword>
<keyword id="KW-0633">Potassium transport</keyword>
<keyword id="KW-0812">Transmembrane</keyword>
<keyword id="KW-1133">Transmembrane helix</keyword>
<keyword id="KW-0813">Transport</keyword>
<organism>
    <name type="scientific">Shigella boydii serotype 4 (strain Sb227)</name>
    <dbReference type="NCBI Taxonomy" id="300268"/>
    <lineage>
        <taxon>Bacteria</taxon>
        <taxon>Pseudomonadati</taxon>
        <taxon>Pseudomonadota</taxon>
        <taxon>Gammaproteobacteria</taxon>
        <taxon>Enterobacterales</taxon>
        <taxon>Enterobacteriaceae</taxon>
        <taxon>Shigella</taxon>
    </lineage>
</organism>